<reference key="1">
    <citation type="journal article" date="1994" name="Virology">
        <title>The Mastomys natalensis papillomavirus: nucleotide sequence, genome organization, and phylogenetic relationship of a rodent papillomavirus involved in tumorigenesis of cutaneous epithelia.</title>
        <authorList>
            <person name="Tan C.-H."/>
            <person name="Tachezy R."/>
            <person name="van Ranst M."/>
            <person name="Chan S.-Y."/>
            <person name="Bernard H.-U."/>
            <person name="Burk R.D."/>
        </authorList>
    </citation>
    <scope>NUCLEOTIDE SEQUENCE [GENOMIC DNA]</scope>
</reference>
<sequence>MRLQILLRGFSSTPQTGFPRGDPVRLHGNTTTGLPIPLRNSSSNQILLREGRGDYPDGARRETRRYYQGPTPTPRSLSPPIYRPPPSYEESRRRRKLRRRQDGRVKYPASPYRTKPPGETSSDDEDEGRGGHEPRPQRRLPRGLRDRGERAPERRRPPVQEGEEDVDGVGALLDDLKLYQEPPGDPVEDSDSPGSRLTPAPPDLSRYDSTRLQVDAESSPPRTPRPAPTLVAECTPGRPSPQTGSGQQALGEPPSRPSRGHCRDPRTACLLIIKGSSNQVKCLRFRLKSWHHSLFSYISTTWQWVPSVGSNRIGRSRILVMCEDSAQMDRFLCTVKIPAGMTVEQCSMASV</sequence>
<comment type="function">
    <text evidence="1">Plays a role in limiting the replication of viral DNA in keratinocytes. Recruits the host NCoR/SMRT complex to viral replication foci to mediate repression of both viral replication and transcription.</text>
</comment>
<comment type="subcellular location">
    <subcellularLocation>
        <location evidence="1">Host nucleus</location>
    </subcellularLocation>
</comment>
<comment type="similarity">
    <text evidence="3">Belongs to the papillomaviridae E8^E2C protein family.</text>
</comment>
<feature type="chain" id="PRO_0000438764" description="Protein E8^E2C">
    <location>
        <begin position="1"/>
        <end position="351"/>
    </location>
</feature>
<feature type="region of interest" description="Disordered" evidence="2">
    <location>
        <begin position="11"/>
        <end position="262"/>
    </location>
</feature>
<feature type="compositionally biased region" description="Polar residues" evidence="2">
    <location>
        <begin position="28"/>
        <end position="46"/>
    </location>
</feature>
<feature type="compositionally biased region" description="Basic and acidic residues" evidence="2">
    <location>
        <begin position="49"/>
        <end position="65"/>
    </location>
</feature>
<feature type="compositionally biased region" description="Basic and acidic residues" evidence="2">
    <location>
        <begin position="143"/>
        <end position="158"/>
    </location>
</feature>
<organismHost>
    <name type="scientific">Mastomys natalensis</name>
    <name type="common">African soft-furred rat</name>
    <name type="synonym">Praomys natalensis</name>
    <dbReference type="NCBI Taxonomy" id="10112"/>
</organismHost>
<accession>P0DOD9</accession>
<organism>
    <name type="scientific">Mastomys natalensis papillomavirus (isolate African multimammate rat)</name>
    <name type="common">MnPV</name>
    <dbReference type="NCBI Taxonomy" id="654915"/>
    <lineage>
        <taxon>Viruses</taxon>
        <taxon>Monodnaviria</taxon>
        <taxon>Shotokuvirae</taxon>
        <taxon>Cossaviricota</taxon>
        <taxon>Papovaviricetes</taxon>
        <taxon>Zurhausenvirales</taxon>
        <taxon>Papillomaviridae</taxon>
        <taxon>Firstpapillomavirinae</taxon>
        <taxon>Iotapapillomavirus</taxon>
        <taxon>Mastomys natalensis papillomavirus</taxon>
    </lineage>
</organism>
<protein>
    <recommendedName>
        <fullName>Protein E8^E2C</fullName>
    </recommendedName>
</protein>
<proteinExistence type="inferred from homology"/>
<dbReference type="EMBL" id="U01834">
    <property type="status" value="NOT_ANNOTATED_CDS"/>
    <property type="molecule type" value="Genomic_DNA"/>
</dbReference>
<dbReference type="SMR" id="P0DOD9"/>
<dbReference type="Proteomes" id="UP000007018">
    <property type="component" value="Segment"/>
</dbReference>
<dbReference type="GO" id="GO:0042025">
    <property type="term" value="C:host cell nucleus"/>
    <property type="evidence" value="ECO:0007669"/>
    <property type="project" value="UniProtKB-SubCell"/>
</dbReference>
<dbReference type="GO" id="GO:0003677">
    <property type="term" value="F:DNA binding"/>
    <property type="evidence" value="ECO:0007669"/>
    <property type="project" value="InterPro"/>
</dbReference>
<dbReference type="GO" id="GO:0003700">
    <property type="term" value="F:DNA-binding transcription factor activity"/>
    <property type="evidence" value="ECO:0007669"/>
    <property type="project" value="InterPro"/>
</dbReference>
<dbReference type="GO" id="GO:0006275">
    <property type="term" value="P:regulation of DNA replication"/>
    <property type="evidence" value="ECO:0007669"/>
    <property type="project" value="InterPro"/>
</dbReference>
<dbReference type="Gene3D" id="3.30.70.330">
    <property type="match status" value="1"/>
</dbReference>
<dbReference type="InterPro" id="IPR035975">
    <property type="entry name" value="E2/EBNA1_C_sf"/>
</dbReference>
<dbReference type="InterPro" id="IPR012677">
    <property type="entry name" value="Nucleotide-bd_a/b_plait_sf"/>
</dbReference>
<dbReference type="InterPro" id="IPR000427">
    <property type="entry name" value="Papillomavirus_E2_C"/>
</dbReference>
<dbReference type="Pfam" id="PF00511">
    <property type="entry name" value="PPV_E2_C"/>
    <property type="match status" value="1"/>
</dbReference>
<dbReference type="SUPFAM" id="SSF54957">
    <property type="entry name" value="Viral DNA-binding domain"/>
    <property type="match status" value="1"/>
</dbReference>
<name>VE8E2_MNPVA</name>
<evidence type="ECO:0000250" key="1">
    <source>
        <dbReference type="UniProtKB" id="P0DKA0"/>
    </source>
</evidence>
<evidence type="ECO:0000256" key="2">
    <source>
        <dbReference type="SAM" id="MobiDB-lite"/>
    </source>
</evidence>
<evidence type="ECO:0000305" key="3"/>
<keyword id="KW-1048">Host nucleus</keyword>
<keyword id="KW-1185">Reference proteome</keyword>